<organism>
    <name type="scientific">Mus musculus</name>
    <name type="common">Mouse</name>
    <dbReference type="NCBI Taxonomy" id="10090"/>
    <lineage>
        <taxon>Eukaryota</taxon>
        <taxon>Metazoa</taxon>
        <taxon>Chordata</taxon>
        <taxon>Craniata</taxon>
        <taxon>Vertebrata</taxon>
        <taxon>Euteleostomi</taxon>
        <taxon>Mammalia</taxon>
        <taxon>Eutheria</taxon>
        <taxon>Euarchontoglires</taxon>
        <taxon>Glires</taxon>
        <taxon>Rodentia</taxon>
        <taxon>Myomorpha</taxon>
        <taxon>Muroidea</taxon>
        <taxon>Muridae</taxon>
        <taxon>Murinae</taxon>
        <taxon>Mus</taxon>
        <taxon>Mus</taxon>
    </lineage>
</organism>
<comment type="function">
    <text evidence="1 4 5 6">G- protein coupled receptor activated by antipsychotics reserpine leading to an increase in intracellular cAMP and its internalization (By similarity). May play a role in locomotor activity through modulation of dopamine, NMDA and ADORA2A-induced locomotor activity. These behavioral changes are accompanied by modulation of the dopamine receptor signaling pathway in striatum (PubMed:24587241, PubMed:28583861). Modulates HTT level via cAMP-dependent but PKA independent mechanisms throught activation of RAB39B that translocates HTT to the endoplasmic reticulum, thus avoiding proteasome degradation (PubMed:25738228).</text>
</comment>
<comment type="subcellular location">
    <subcellularLocation>
        <location>Cell membrane</location>
        <topology>Multi-pass membrane protein</topology>
    </subcellularLocation>
</comment>
<comment type="tissue specificity">
    <text evidence="4 6">Expressed in brain, especially in striatum (PubMed:24587241). Expressed in the striatum, nucleus accumbens, and lateral globus pallidus (PubMed:28583861).</text>
</comment>
<comment type="disruption phenotype">
    <text evidence="4 6">Gpr52 knockout mice are normal in body and brain weight. In the open field test, mice stay and move around the central zone significantly longer. The total distance traveled and brain morphology are normal. Mice are much more sensitive to the startle response following dizocilpine administration. Thus mice displayed psychosis-related behaviors (PubMed:24587241). Mice exhibit a significantly higher istradefylline-induced locomotor activity (PubMed:28583861).</text>
</comment>
<comment type="miscellaneous">
    <text evidence="5">GPR52 is located within an intron of RABGAP1L gene, which exhibits epistatic effects on GPR52-mediated modulation of HTT levels by blocking this modulation.</text>
</comment>
<comment type="similarity">
    <text evidence="3">Belongs to the G-protein coupled receptor 1 family.</text>
</comment>
<dbReference type="EMBL" id="AC117787">
    <property type="status" value="NOT_ANNOTATED_CDS"/>
    <property type="molecule type" value="Genomic_DNA"/>
</dbReference>
<dbReference type="CCDS" id="CCDS87900.1"/>
<dbReference type="RefSeq" id="NP_001139802.1">
    <property type="nucleotide sequence ID" value="NM_001146330.2"/>
</dbReference>
<dbReference type="RefSeq" id="NP_001355597.1">
    <property type="nucleotide sequence ID" value="NM_001368668.1"/>
</dbReference>
<dbReference type="RefSeq" id="XP_017177375.1">
    <property type="nucleotide sequence ID" value="XM_017321886.1"/>
</dbReference>
<dbReference type="RefSeq" id="XP_017177377.1">
    <property type="nucleotide sequence ID" value="XM_017321888.1"/>
</dbReference>
<dbReference type="SMR" id="P0C5J4"/>
<dbReference type="FunCoup" id="P0C5J4">
    <property type="interactions" value="173"/>
</dbReference>
<dbReference type="STRING" id="10090.ENSMUSP00000158769"/>
<dbReference type="BindingDB" id="P0C5J4"/>
<dbReference type="ChEMBL" id="CHEMBL4105791"/>
<dbReference type="GlyCosmos" id="P0C5J4">
    <property type="glycosylation" value="3 sites, No reported glycans"/>
</dbReference>
<dbReference type="GlyGen" id="P0C5J4">
    <property type="glycosylation" value="3 sites"/>
</dbReference>
<dbReference type="PhosphoSitePlus" id="P0C5J4"/>
<dbReference type="SwissPalm" id="P0C5J4"/>
<dbReference type="ProteomicsDB" id="271070"/>
<dbReference type="Antibodypedia" id="34403">
    <property type="antibodies" value="283 antibodies from 29 providers"/>
</dbReference>
<dbReference type="Ensembl" id="ENSMUST00000238289.2">
    <property type="protein sequence ID" value="ENSMUSP00000158769.2"/>
    <property type="gene ID" value="ENSMUSG00000118401.2"/>
</dbReference>
<dbReference type="GeneID" id="620246"/>
<dbReference type="KEGG" id="mmu:620246"/>
<dbReference type="UCSC" id="uc011wum.1">
    <property type="organism name" value="mouse"/>
</dbReference>
<dbReference type="AGR" id="MGI:3643278"/>
<dbReference type="CTD" id="9293"/>
<dbReference type="MGI" id="MGI:3643278">
    <property type="gene designation" value="Gpr52"/>
</dbReference>
<dbReference type="VEuPathDB" id="HostDB:ENSMUSG00000118401"/>
<dbReference type="GeneTree" id="ENSGT00940000163422"/>
<dbReference type="InParanoid" id="P0C5J4"/>
<dbReference type="OMA" id="EHHSCPL"/>
<dbReference type="OrthoDB" id="6376512at2759"/>
<dbReference type="PhylomeDB" id="P0C5J4"/>
<dbReference type="BioGRID-ORCS" id="620246">
    <property type="hits" value="4 hits in 17 CRISPR screens"/>
</dbReference>
<dbReference type="PRO" id="PR:P0C5J4"/>
<dbReference type="Proteomes" id="UP000000589">
    <property type="component" value="Chromosome 1"/>
</dbReference>
<dbReference type="RNAct" id="P0C5J4">
    <property type="molecule type" value="protein"/>
</dbReference>
<dbReference type="Bgee" id="ENSMUSG00000118401">
    <property type="expression patterns" value="Expressed in striatum and 21 other cell types or tissues"/>
</dbReference>
<dbReference type="GO" id="GO:0005886">
    <property type="term" value="C:plasma membrane"/>
    <property type="evidence" value="ECO:0007669"/>
    <property type="project" value="UniProtKB-SubCell"/>
</dbReference>
<dbReference type="GO" id="GO:0004930">
    <property type="term" value="F:G protein-coupled receptor activity"/>
    <property type="evidence" value="ECO:0000250"/>
    <property type="project" value="UniProtKB"/>
</dbReference>
<dbReference type="GO" id="GO:0007626">
    <property type="term" value="P:locomotory behavior"/>
    <property type="evidence" value="ECO:0000315"/>
    <property type="project" value="UniProtKB"/>
</dbReference>
<dbReference type="GO" id="GO:0009410">
    <property type="term" value="P:response to xenobiotic stimulus"/>
    <property type="evidence" value="ECO:0000250"/>
    <property type="project" value="UniProtKB"/>
</dbReference>
<dbReference type="CDD" id="cd00637">
    <property type="entry name" value="7tm_classA_rhodopsin-like"/>
    <property type="match status" value="1"/>
</dbReference>
<dbReference type="FunFam" id="1.20.1070.10:FF:000177">
    <property type="entry name" value="probable G-protein coupled receptor 52"/>
    <property type="match status" value="1"/>
</dbReference>
<dbReference type="Gene3D" id="1.20.1070.10">
    <property type="entry name" value="Rhodopsin 7-helix transmembrane proteins"/>
    <property type="match status" value="1"/>
</dbReference>
<dbReference type="InterPro" id="IPR000276">
    <property type="entry name" value="GPCR_Rhodpsn"/>
</dbReference>
<dbReference type="InterPro" id="IPR017452">
    <property type="entry name" value="GPCR_Rhodpsn_7TM"/>
</dbReference>
<dbReference type="InterPro" id="IPR050569">
    <property type="entry name" value="TAAR"/>
</dbReference>
<dbReference type="PANTHER" id="PTHR24249:SF392">
    <property type="entry name" value="G-PROTEIN COUPLED RECEPTOR 52-RELATED"/>
    <property type="match status" value="1"/>
</dbReference>
<dbReference type="PANTHER" id="PTHR24249">
    <property type="entry name" value="HISTAMINE RECEPTOR-RELATED G-PROTEIN COUPLED RECEPTOR"/>
    <property type="match status" value="1"/>
</dbReference>
<dbReference type="Pfam" id="PF00001">
    <property type="entry name" value="7tm_1"/>
    <property type="match status" value="1"/>
</dbReference>
<dbReference type="PRINTS" id="PR00237">
    <property type="entry name" value="GPCRRHODOPSN"/>
</dbReference>
<dbReference type="SUPFAM" id="SSF81321">
    <property type="entry name" value="Family A G protein-coupled receptor-like"/>
    <property type="match status" value="1"/>
</dbReference>
<dbReference type="PROSITE" id="PS00237">
    <property type="entry name" value="G_PROTEIN_RECEP_F1_1"/>
    <property type="match status" value="1"/>
</dbReference>
<dbReference type="PROSITE" id="PS50262">
    <property type="entry name" value="G_PROTEIN_RECEP_F1_2"/>
    <property type="match status" value="1"/>
</dbReference>
<gene>
    <name evidence="7" type="primary">Gpr52</name>
</gene>
<feature type="chain" id="PRO_0000307680" description="G-protein coupled receptor 52">
    <location>
        <begin position="1"/>
        <end position="361"/>
    </location>
</feature>
<feature type="topological domain" description="Extracellular" evidence="2">
    <location>
        <begin position="1"/>
        <end position="44"/>
    </location>
</feature>
<feature type="transmembrane region" description="Helical; Name=1" evidence="2">
    <location>
        <begin position="45"/>
        <end position="65"/>
    </location>
</feature>
<feature type="topological domain" description="Cytoplasmic" evidence="2">
    <location>
        <begin position="66"/>
        <end position="81"/>
    </location>
</feature>
<feature type="transmembrane region" description="Helical; Name=2" evidence="2">
    <location>
        <begin position="82"/>
        <end position="102"/>
    </location>
</feature>
<feature type="topological domain" description="Extracellular" evidence="2">
    <location>
        <begin position="103"/>
        <end position="115"/>
    </location>
</feature>
<feature type="transmembrane region" description="Helical; Name=3" evidence="2">
    <location>
        <begin position="116"/>
        <end position="136"/>
    </location>
</feature>
<feature type="topological domain" description="Cytoplasmic" evidence="2">
    <location>
        <begin position="137"/>
        <end position="159"/>
    </location>
</feature>
<feature type="transmembrane region" description="Helical; Name=4" evidence="2">
    <location>
        <begin position="160"/>
        <end position="180"/>
    </location>
</feature>
<feature type="topological domain" description="Extracellular" evidence="2">
    <location>
        <begin position="181"/>
        <end position="205"/>
    </location>
</feature>
<feature type="transmembrane region" description="Helical; Name=5" evidence="2">
    <location>
        <begin position="206"/>
        <end position="226"/>
    </location>
</feature>
<feature type="topological domain" description="Cytoplasmic" evidence="2">
    <location>
        <begin position="227"/>
        <end position="265"/>
    </location>
</feature>
<feature type="transmembrane region" description="Helical; Name=6" evidence="2">
    <location>
        <begin position="266"/>
        <end position="286"/>
    </location>
</feature>
<feature type="topological domain" description="Extracellular" evidence="2">
    <location>
        <begin position="287"/>
        <end position="296"/>
    </location>
</feature>
<feature type="transmembrane region" description="Helical; Name=7" evidence="2">
    <location>
        <begin position="297"/>
        <end position="317"/>
    </location>
</feature>
<feature type="topological domain" description="Cytoplasmic" evidence="2">
    <location>
        <begin position="318"/>
        <end position="361"/>
    </location>
</feature>
<feature type="glycosylation site" description="N-linked (GlcNAc...) asparagine" evidence="2">
    <location>
        <position position="2"/>
    </location>
</feature>
<feature type="glycosylation site" description="N-linked (GlcNAc...) asparagine" evidence="2">
    <location>
        <position position="13"/>
    </location>
</feature>
<feature type="glycosylation site" description="N-linked (GlcNAc...) asparagine" evidence="2">
    <location>
        <position position="20"/>
    </location>
</feature>
<feature type="disulfide bond" evidence="3">
    <location>
        <begin position="114"/>
        <end position="193"/>
    </location>
</feature>
<accession>P0C5J4</accession>
<evidence type="ECO:0000250" key="1">
    <source>
        <dbReference type="UniProtKB" id="Q9Y2T5"/>
    </source>
</evidence>
<evidence type="ECO:0000255" key="2"/>
<evidence type="ECO:0000255" key="3">
    <source>
        <dbReference type="PROSITE-ProRule" id="PRU00521"/>
    </source>
</evidence>
<evidence type="ECO:0000269" key="4">
    <source>
    </source>
</evidence>
<evidence type="ECO:0000269" key="5">
    <source>
    </source>
</evidence>
<evidence type="ECO:0000269" key="6">
    <source>
    </source>
</evidence>
<evidence type="ECO:0000312" key="7">
    <source>
        <dbReference type="MGI" id="MGI:3643278"/>
    </source>
</evidence>
<proteinExistence type="evidence at transcript level"/>
<protein>
    <recommendedName>
        <fullName evidence="1">G-protein coupled receptor 52</fullName>
    </recommendedName>
</protein>
<keyword id="KW-1003">Cell membrane</keyword>
<keyword id="KW-1015">Disulfide bond</keyword>
<keyword id="KW-0297">G-protein coupled receptor</keyword>
<keyword id="KW-0325">Glycoprotein</keyword>
<keyword id="KW-0472">Membrane</keyword>
<keyword id="KW-0675">Receptor</keyword>
<keyword id="KW-1185">Reference proteome</keyword>
<keyword id="KW-0807">Transducer</keyword>
<keyword id="KW-0812">Transmembrane</keyword>
<keyword id="KW-1133">Transmembrane helix</keyword>
<sequence>MNESRWTEWRILNMSSSIVNVSEHHSCPLGFGHYSVEDVCIFETVVIVLLTFLIISGNLTVIFVFHCAPLLHHYTTSYFIQTMAYADLLVGVTCLVPTLSLLHYSTGVHESLTCQVFGYIISVLKSVSMACLACISVDRYLAITKPLSYNQLVTPCRLRICIIMIWIYSCLIFLPSFFGWGKPGYHGDIFEWCATSWLTSAYFTCFIVCLLYAPAALVVCFTYFHIFKICRQHTKEINDRRARFPSHEVEASREAGHSPDRRYAMVLFRITSVFYMLWLPYIIYFLLESSRVLDNPTLSFLTTWLAISNSFCNCVIYSLSNSVFRLGLRRLSETMCTSCVCAKDQEAQDPKPRRRANSCSI</sequence>
<name>GPR52_MOUSE</name>
<reference key="1">
    <citation type="journal article" date="2009" name="PLoS Biol.">
        <title>Lineage-specific biology revealed by a finished genome assembly of the mouse.</title>
        <authorList>
            <person name="Church D.M."/>
            <person name="Goodstadt L."/>
            <person name="Hillier L.W."/>
            <person name="Zody M.C."/>
            <person name="Goldstein S."/>
            <person name="She X."/>
            <person name="Bult C.J."/>
            <person name="Agarwala R."/>
            <person name="Cherry J.L."/>
            <person name="DiCuccio M."/>
            <person name="Hlavina W."/>
            <person name="Kapustin Y."/>
            <person name="Meric P."/>
            <person name="Maglott D."/>
            <person name="Birtle Z."/>
            <person name="Marques A.C."/>
            <person name="Graves T."/>
            <person name="Zhou S."/>
            <person name="Teague B."/>
            <person name="Potamousis K."/>
            <person name="Churas C."/>
            <person name="Place M."/>
            <person name="Herschleb J."/>
            <person name="Runnheim R."/>
            <person name="Forrest D."/>
            <person name="Amos-Landgraf J."/>
            <person name="Schwartz D.C."/>
            <person name="Cheng Z."/>
            <person name="Lindblad-Toh K."/>
            <person name="Eichler E.E."/>
            <person name="Ponting C.P."/>
        </authorList>
    </citation>
    <scope>NUCLEOTIDE SEQUENCE [LARGE SCALE GENOMIC DNA]</scope>
    <source>
        <strain>C57BL/6J</strain>
    </source>
</reference>
<reference key="2">
    <citation type="journal article" date="2014" name="PLoS ONE">
        <title>Anatomical transcriptome of G protein-coupled receptors leads to the identification of a novel therapeutic candidate GPR52 for psychiatric disorders.</title>
        <authorList>
            <person name="Komatsu H."/>
            <person name="Maruyama M."/>
            <person name="Yao S."/>
            <person name="Shinohara T."/>
            <person name="Sakuma K."/>
            <person name="Imaichi S."/>
            <person name="Chikatsu T."/>
            <person name="Kuniyeda K."/>
            <person name="Siu F.K."/>
            <person name="Peng L.S."/>
            <person name="Zhuo K."/>
            <person name="Mun L.S."/>
            <person name="Han T.M."/>
            <person name="Matsumoto Y."/>
            <person name="Hashimoto T."/>
            <person name="Miyajima N."/>
            <person name="Itoh Y."/>
            <person name="Ogi K."/>
            <person name="Habata Y."/>
            <person name="Mori M."/>
        </authorList>
    </citation>
    <scope>TISSUE SPECIFICITY</scope>
    <scope>DISRUPTION PHENOTYPE</scope>
    <scope>FUNCTION</scope>
</reference>
<reference key="3">
    <citation type="journal article" date="2015" name="Elife">
        <title>A striatal-enriched intronic GPCR modulates huntingtin levels and toxicity.</title>
        <authorList>
            <person name="Yao Y."/>
            <person name="Cui X."/>
            <person name="Al-Ramahi I."/>
            <person name="Sun X."/>
            <person name="Li B."/>
            <person name="Hou J."/>
            <person name="Difiglia M."/>
            <person name="Palacino J."/>
            <person name="Wu Z.Y."/>
            <person name="Ma L."/>
            <person name="Botas J."/>
            <person name="Lu B."/>
        </authorList>
    </citation>
    <scope>FUNCTION</scope>
</reference>
<reference key="4">
    <citation type="journal article" date="2017" name="Brain Res.">
        <title>Genetic deletion of GPR52 enhances the locomotor-stimulating effect of an adenosine A2A receptor antagonist in mice: A potential role of GPR52 in the function of striatopallidal neurons.</title>
        <authorList>
            <person name="Nishiyama K."/>
            <person name="Suzuki H."/>
            <person name="Maruyama M."/>
            <person name="Yoshihara T."/>
            <person name="Ohta H."/>
        </authorList>
    </citation>
    <scope>TISSUE SPECIFICITY</scope>
    <scope>DISRUPTION PHENOTYPE</scope>
    <scope>FUNCTION</scope>
</reference>